<comment type="function">
    <text evidence="1">Key enzyme in the regulation of glycerol uptake and metabolism. Catalyzes the phosphorylation of glycerol to yield sn-glycerol 3-phosphate.</text>
</comment>
<comment type="catalytic activity">
    <reaction evidence="1">
        <text>glycerol + ATP = sn-glycerol 3-phosphate + ADP + H(+)</text>
        <dbReference type="Rhea" id="RHEA:21644"/>
        <dbReference type="ChEBI" id="CHEBI:15378"/>
        <dbReference type="ChEBI" id="CHEBI:17754"/>
        <dbReference type="ChEBI" id="CHEBI:30616"/>
        <dbReference type="ChEBI" id="CHEBI:57597"/>
        <dbReference type="ChEBI" id="CHEBI:456216"/>
        <dbReference type="EC" id="2.7.1.30"/>
    </reaction>
</comment>
<comment type="pathway">
    <text evidence="1">Polyol metabolism; glycerol degradation via glycerol kinase pathway; sn-glycerol 3-phosphate from glycerol: step 1/1.</text>
</comment>
<comment type="similarity">
    <text evidence="1">Belongs to the FGGY kinase family.</text>
</comment>
<accession>B6YT00</accession>
<gene>
    <name evidence="1" type="primary">glpK</name>
    <name type="ordered locus">TON_0202</name>
</gene>
<proteinExistence type="inferred from homology"/>
<sequence length="493" mass="55190">MDRFILSLDEGTTSARAIIFDRESNVLGVGQYEFPQHYPRPGWVEHDPNEIWEAQFRAIKTAIERAKIEPTQIAAIGVTNQRETTIVWDKSGKPLHNAIVWQCRRTAEMVEEIKREYSEVIKEKTGLVPDAYFSASKLKWLLDNVPGLREKAEKGEVLFGTVDTFLIYRLTGEHVTDYSNASRTMLFNIKKLEWDDELLEIFGVPEGVLPEVKESSEIYGYTKKELLGAEIPVSGDAGDQQAALFGQAAFETGMVKATYGTGNFILANTGKTVRYSDNLLTTVAWGLNGKVSYALEGSVFITGAAVQWLRDGIKIIKSAPETEELARKLQSNEGVYFVPAFVGLGAPYWDQFARGLIIGITRGTGREHLARATLEAIAYLTRDVVEEMERLVGIKELRVDGGATANDFLMQFQADILNRRVVRPVVKETTALGAAYLAGLAVDYWEGLEEIKSLWKAEKVFGPVMDEETRRKLYRGWKEAVKRAMGWAKVVDA</sequence>
<reference key="1">
    <citation type="journal article" date="2008" name="J. Bacteriol.">
        <title>The complete genome sequence of Thermococcus onnurineus NA1 reveals a mixed heterotrophic and carboxydotrophic metabolism.</title>
        <authorList>
            <person name="Lee H.S."/>
            <person name="Kang S.G."/>
            <person name="Bae S.S."/>
            <person name="Lim J.K."/>
            <person name="Cho Y."/>
            <person name="Kim Y.J."/>
            <person name="Jeon J.H."/>
            <person name="Cha S.-S."/>
            <person name="Kwon K.K."/>
            <person name="Kim H.-T."/>
            <person name="Park C.-J."/>
            <person name="Lee H.-W."/>
            <person name="Kim S.I."/>
            <person name="Chun J."/>
            <person name="Colwell R.R."/>
            <person name="Kim S.-J."/>
            <person name="Lee J.-H."/>
        </authorList>
    </citation>
    <scope>NUCLEOTIDE SEQUENCE [LARGE SCALE GENOMIC DNA]</scope>
    <source>
        <strain>NA1</strain>
    </source>
</reference>
<evidence type="ECO:0000255" key="1">
    <source>
        <dbReference type="HAMAP-Rule" id="MF_00186"/>
    </source>
</evidence>
<protein>
    <recommendedName>
        <fullName evidence="1">Glycerol kinase</fullName>
        <ecNumber evidence="1">2.7.1.30</ecNumber>
    </recommendedName>
    <alternativeName>
        <fullName evidence="1">ATP:glycerol 3-phosphotransferase</fullName>
    </alternativeName>
    <alternativeName>
        <fullName evidence="1">Glycerokinase</fullName>
        <shortName evidence="1">GK</shortName>
    </alternativeName>
</protein>
<organism>
    <name type="scientific">Thermococcus onnurineus (strain NA1)</name>
    <dbReference type="NCBI Taxonomy" id="523850"/>
    <lineage>
        <taxon>Archaea</taxon>
        <taxon>Methanobacteriati</taxon>
        <taxon>Methanobacteriota</taxon>
        <taxon>Thermococci</taxon>
        <taxon>Thermococcales</taxon>
        <taxon>Thermococcaceae</taxon>
        <taxon>Thermococcus</taxon>
    </lineage>
</organism>
<feature type="chain" id="PRO_1000098768" description="Glycerol kinase">
    <location>
        <begin position="1"/>
        <end position="493"/>
    </location>
</feature>
<feature type="binding site" evidence="1">
    <location>
        <position position="12"/>
    </location>
    <ligand>
        <name>ADP</name>
        <dbReference type="ChEBI" id="CHEBI:456216"/>
    </ligand>
</feature>
<feature type="binding site" evidence="1">
    <location>
        <position position="12"/>
    </location>
    <ligand>
        <name>ATP</name>
        <dbReference type="ChEBI" id="CHEBI:30616"/>
    </ligand>
</feature>
<feature type="binding site" evidence="1">
    <location>
        <position position="12"/>
    </location>
    <ligand>
        <name>sn-glycerol 3-phosphate</name>
        <dbReference type="ChEBI" id="CHEBI:57597"/>
    </ligand>
</feature>
<feature type="binding site" evidence="1">
    <location>
        <position position="13"/>
    </location>
    <ligand>
        <name>ATP</name>
        <dbReference type="ChEBI" id="CHEBI:30616"/>
    </ligand>
</feature>
<feature type="binding site" evidence="1">
    <location>
        <position position="14"/>
    </location>
    <ligand>
        <name>ATP</name>
        <dbReference type="ChEBI" id="CHEBI:30616"/>
    </ligand>
</feature>
<feature type="binding site" evidence="1">
    <location>
        <position position="16"/>
    </location>
    <ligand>
        <name>ADP</name>
        <dbReference type="ChEBI" id="CHEBI:456216"/>
    </ligand>
</feature>
<feature type="binding site" evidence="1">
    <location>
        <position position="82"/>
    </location>
    <ligand>
        <name>glycerol</name>
        <dbReference type="ChEBI" id="CHEBI:17754"/>
    </ligand>
</feature>
<feature type="binding site" evidence="1">
    <location>
        <position position="82"/>
    </location>
    <ligand>
        <name>sn-glycerol 3-phosphate</name>
        <dbReference type="ChEBI" id="CHEBI:57597"/>
    </ligand>
</feature>
<feature type="binding site" evidence="1">
    <location>
        <position position="83"/>
    </location>
    <ligand>
        <name>glycerol</name>
        <dbReference type="ChEBI" id="CHEBI:17754"/>
    </ligand>
</feature>
<feature type="binding site" evidence="1">
    <location>
        <position position="83"/>
    </location>
    <ligand>
        <name>sn-glycerol 3-phosphate</name>
        <dbReference type="ChEBI" id="CHEBI:57597"/>
    </ligand>
</feature>
<feature type="binding site" evidence="1">
    <location>
        <position position="132"/>
    </location>
    <ligand>
        <name>glycerol</name>
        <dbReference type="ChEBI" id="CHEBI:17754"/>
    </ligand>
</feature>
<feature type="binding site" evidence="1">
    <location>
        <position position="132"/>
    </location>
    <ligand>
        <name>sn-glycerol 3-phosphate</name>
        <dbReference type="ChEBI" id="CHEBI:57597"/>
    </ligand>
</feature>
<feature type="binding site" evidence="1">
    <location>
        <position position="239"/>
    </location>
    <ligand>
        <name>glycerol</name>
        <dbReference type="ChEBI" id="CHEBI:17754"/>
    </ligand>
</feature>
<feature type="binding site" evidence="1">
    <location>
        <position position="239"/>
    </location>
    <ligand>
        <name>sn-glycerol 3-phosphate</name>
        <dbReference type="ChEBI" id="CHEBI:57597"/>
    </ligand>
</feature>
<feature type="binding site" evidence="1">
    <location>
        <position position="240"/>
    </location>
    <ligand>
        <name>glycerol</name>
        <dbReference type="ChEBI" id="CHEBI:17754"/>
    </ligand>
</feature>
<feature type="binding site" evidence="1">
    <location>
        <position position="261"/>
    </location>
    <ligand>
        <name>ADP</name>
        <dbReference type="ChEBI" id="CHEBI:456216"/>
    </ligand>
</feature>
<feature type="binding site" evidence="1">
    <location>
        <position position="261"/>
    </location>
    <ligand>
        <name>ATP</name>
        <dbReference type="ChEBI" id="CHEBI:30616"/>
    </ligand>
</feature>
<feature type="binding site" evidence="1">
    <location>
        <position position="303"/>
    </location>
    <ligand>
        <name>ADP</name>
        <dbReference type="ChEBI" id="CHEBI:456216"/>
    </ligand>
</feature>
<feature type="binding site" evidence="1">
    <location>
        <position position="303"/>
    </location>
    <ligand>
        <name>ATP</name>
        <dbReference type="ChEBI" id="CHEBI:30616"/>
    </ligand>
</feature>
<feature type="binding site" evidence="1">
    <location>
        <position position="307"/>
    </location>
    <ligand>
        <name>ATP</name>
        <dbReference type="ChEBI" id="CHEBI:30616"/>
    </ligand>
</feature>
<feature type="binding site" evidence="1">
    <location>
        <position position="402"/>
    </location>
    <ligand>
        <name>ADP</name>
        <dbReference type="ChEBI" id="CHEBI:456216"/>
    </ligand>
</feature>
<feature type="binding site" evidence="1">
    <location>
        <position position="402"/>
    </location>
    <ligand>
        <name>ATP</name>
        <dbReference type="ChEBI" id="CHEBI:30616"/>
    </ligand>
</feature>
<feature type="binding site" evidence="1">
    <location>
        <position position="406"/>
    </location>
    <ligand>
        <name>ADP</name>
        <dbReference type="ChEBI" id="CHEBI:456216"/>
    </ligand>
</feature>
<keyword id="KW-0067">ATP-binding</keyword>
<keyword id="KW-0319">Glycerol metabolism</keyword>
<keyword id="KW-0418">Kinase</keyword>
<keyword id="KW-0547">Nucleotide-binding</keyword>
<keyword id="KW-0808">Transferase</keyword>
<dbReference type="EC" id="2.7.1.30" evidence="1"/>
<dbReference type="EMBL" id="CP000855">
    <property type="protein sequence ID" value="ACJ15687.1"/>
    <property type="molecule type" value="Genomic_DNA"/>
</dbReference>
<dbReference type="RefSeq" id="WP_012571160.1">
    <property type="nucleotide sequence ID" value="NC_011529.1"/>
</dbReference>
<dbReference type="SMR" id="B6YT00"/>
<dbReference type="STRING" id="523850.TON_0202"/>
<dbReference type="GeneID" id="7017859"/>
<dbReference type="KEGG" id="ton:TON_0202"/>
<dbReference type="PATRIC" id="fig|523850.10.peg.204"/>
<dbReference type="eggNOG" id="arCOG00024">
    <property type="taxonomic scope" value="Archaea"/>
</dbReference>
<dbReference type="HOGENOM" id="CLU_009281_2_3_2"/>
<dbReference type="OrthoDB" id="26592at2157"/>
<dbReference type="UniPathway" id="UPA00618">
    <property type="reaction ID" value="UER00672"/>
</dbReference>
<dbReference type="Proteomes" id="UP000002727">
    <property type="component" value="Chromosome"/>
</dbReference>
<dbReference type="GO" id="GO:0005829">
    <property type="term" value="C:cytosol"/>
    <property type="evidence" value="ECO:0007669"/>
    <property type="project" value="TreeGrafter"/>
</dbReference>
<dbReference type="GO" id="GO:0005524">
    <property type="term" value="F:ATP binding"/>
    <property type="evidence" value="ECO:0007669"/>
    <property type="project" value="UniProtKB-UniRule"/>
</dbReference>
<dbReference type="GO" id="GO:0004370">
    <property type="term" value="F:glycerol kinase activity"/>
    <property type="evidence" value="ECO:0000250"/>
    <property type="project" value="UniProtKB"/>
</dbReference>
<dbReference type="GO" id="GO:0019563">
    <property type="term" value="P:glycerol catabolic process"/>
    <property type="evidence" value="ECO:0007669"/>
    <property type="project" value="UniProtKB-UniRule"/>
</dbReference>
<dbReference type="GO" id="GO:0006071">
    <property type="term" value="P:glycerol metabolic process"/>
    <property type="evidence" value="ECO:0000250"/>
    <property type="project" value="UniProtKB"/>
</dbReference>
<dbReference type="GO" id="GO:0006072">
    <property type="term" value="P:glycerol-3-phosphate metabolic process"/>
    <property type="evidence" value="ECO:0007669"/>
    <property type="project" value="InterPro"/>
</dbReference>
<dbReference type="CDD" id="cd07786">
    <property type="entry name" value="FGGY_EcGK_like"/>
    <property type="match status" value="1"/>
</dbReference>
<dbReference type="FunFam" id="3.30.420.40:FF:000007">
    <property type="entry name" value="Glycerol kinase"/>
    <property type="match status" value="1"/>
</dbReference>
<dbReference type="FunFam" id="3.30.420.40:FF:000008">
    <property type="entry name" value="Glycerol kinase"/>
    <property type="match status" value="1"/>
</dbReference>
<dbReference type="Gene3D" id="3.30.420.40">
    <property type="match status" value="2"/>
</dbReference>
<dbReference type="HAMAP" id="MF_00186">
    <property type="entry name" value="Glycerol_kin"/>
    <property type="match status" value="1"/>
</dbReference>
<dbReference type="InterPro" id="IPR043129">
    <property type="entry name" value="ATPase_NBD"/>
</dbReference>
<dbReference type="InterPro" id="IPR000577">
    <property type="entry name" value="Carb_kinase_FGGY"/>
</dbReference>
<dbReference type="InterPro" id="IPR018483">
    <property type="entry name" value="Carb_kinase_FGGY_CS"/>
</dbReference>
<dbReference type="InterPro" id="IPR018485">
    <property type="entry name" value="FGGY_C"/>
</dbReference>
<dbReference type="InterPro" id="IPR018484">
    <property type="entry name" value="FGGY_N"/>
</dbReference>
<dbReference type="InterPro" id="IPR005999">
    <property type="entry name" value="Glycerol_kin"/>
</dbReference>
<dbReference type="NCBIfam" id="TIGR01311">
    <property type="entry name" value="glycerol_kin"/>
    <property type="match status" value="1"/>
</dbReference>
<dbReference type="NCBIfam" id="NF000756">
    <property type="entry name" value="PRK00047.1"/>
    <property type="match status" value="1"/>
</dbReference>
<dbReference type="PANTHER" id="PTHR10196:SF69">
    <property type="entry name" value="GLYCEROL KINASE"/>
    <property type="match status" value="1"/>
</dbReference>
<dbReference type="PANTHER" id="PTHR10196">
    <property type="entry name" value="SUGAR KINASE"/>
    <property type="match status" value="1"/>
</dbReference>
<dbReference type="Pfam" id="PF02782">
    <property type="entry name" value="FGGY_C"/>
    <property type="match status" value="1"/>
</dbReference>
<dbReference type="Pfam" id="PF00370">
    <property type="entry name" value="FGGY_N"/>
    <property type="match status" value="1"/>
</dbReference>
<dbReference type="PIRSF" id="PIRSF000538">
    <property type="entry name" value="GlpK"/>
    <property type="match status" value="1"/>
</dbReference>
<dbReference type="SUPFAM" id="SSF53067">
    <property type="entry name" value="Actin-like ATPase domain"/>
    <property type="match status" value="2"/>
</dbReference>
<dbReference type="PROSITE" id="PS00933">
    <property type="entry name" value="FGGY_KINASES_1"/>
    <property type="match status" value="1"/>
</dbReference>
<dbReference type="PROSITE" id="PS00445">
    <property type="entry name" value="FGGY_KINASES_2"/>
    <property type="match status" value="1"/>
</dbReference>
<name>GLPK_THEON</name>